<organism>
    <name type="scientific">Pseudomonas aeruginosa (strain LESB58)</name>
    <dbReference type="NCBI Taxonomy" id="557722"/>
    <lineage>
        <taxon>Bacteria</taxon>
        <taxon>Pseudomonadati</taxon>
        <taxon>Pseudomonadota</taxon>
        <taxon>Gammaproteobacteria</taxon>
        <taxon>Pseudomonadales</taxon>
        <taxon>Pseudomonadaceae</taxon>
        <taxon>Pseudomonas</taxon>
    </lineage>
</organism>
<proteinExistence type="inferred from homology"/>
<sequence length="174" mass="20210">MAEFHDDDSQFEEKSKSQIKRELHALQDLGERLTTLQPQLLERLPLTDPLRKALLEAPKHKAHIARKRHIQYIGKLMRDQDVDAIVALIDQVDSSTRQYNERFHALERWRDQLIAGGDAALDAFVGEFPECDRQHLRGLVRHAQHEAAHNKPPAAARKVFKYIRELDETKRGLR</sequence>
<reference key="1">
    <citation type="journal article" date="2009" name="Genome Res.">
        <title>Newly introduced genomic prophage islands are critical determinants of in vivo competitiveness in the Liverpool epidemic strain of Pseudomonas aeruginosa.</title>
        <authorList>
            <person name="Winstanley C."/>
            <person name="Langille M.G.I."/>
            <person name="Fothergill J.L."/>
            <person name="Kukavica-Ibrulj I."/>
            <person name="Paradis-Bleau C."/>
            <person name="Sanschagrin F."/>
            <person name="Thomson N.R."/>
            <person name="Winsor G.L."/>
            <person name="Quail M.A."/>
            <person name="Lennard N."/>
            <person name="Bignell A."/>
            <person name="Clarke L."/>
            <person name="Seeger K."/>
            <person name="Saunders D."/>
            <person name="Harris D."/>
            <person name="Parkhill J."/>
            <person name="Hancock R.E.W."/>
            <person name="Brinkman F.S.L."/>
            <person name="Levesque R.C."/>
        </authorList>
    </citation>
    <scope>NUCLEOTIDE SEQUENCE [LARGE SCALE GENOMIC DNA]</scope>
    <source>
        <strain>LESB58</strain>
    </source>
</reference>
<evidence type="ECO:0000255" key="1">
    <source>
        <dbReference type="HAMAP-Rule" id="MF_00765"/>
    </source>
</evidence>
<feature type="chain" id="PRO_1000198390" description="Dual-action ribosomal maturation protein DarP">
    <location>
        <begin position="1"/>
        <end position="174"/>
    </location>
</feature>
<protein>
    <recommendedName>
        <fullName evidence="1">Dual-action ribosomal maturation protein DarP</fullName>
    </recommendedName>
    <alternativeName>
        <fullName evidence="1">Large ribosomal subunit assembly factor DarP</fullName>
    </alternativeName>
</protein>
<dbReference type="EMBL" id="FM209186">
    <property type="protein sequence ID" value="CAW29606.1"/>
    <property type="molecule type" value="Genomic_DNA"/>
</dbReference>
<dbReference type="SMR" id="B7V012"/>
<dbReference type="KEGG" id="pag:PLES_48521"/>
<dbReference type="HOGENOM" id="CLU_106757_4_0_6"/>
<dbReference type="GO" id="GO:0005829">
    <property type="term" value="C:cytosol"/>
    <property type="evidence" value="ECO:0007669"/>
    <property type="project" value="TreeGrafter"/>
</dbReference>
<dbReference type="GO" id="GO:0043022">
    <property type="term" value="F:ribosome binding"/>
    <property type="evidence" value="ECO:0007669"/>
    <property type="project" value="UniProtKB-UniRule"/>
</dbReference>
<dbReference type="GO" id="GO:0019843">
    <property type="term" value="F:rRNA binding"/>
    <property type="evidence" value="ECO:0007669"/>
    <property type="project" value="UniProtKB-UniRule"/>
</dbReference>
<dbReference type="GO" id="GO:1902626">
    <property type="term" value="P:assembly of large subunit precursor of preribosome"/>
    <property type="evidence" value="ECO:0007669"/>
    <property type="project" value="UniProtKB-UniRule"/>
</dbReference>
<dbReference type="CDD" id="cd16331">
    <property type="entry name" value="YjgA-like"/>
    <property type="match status" value="1"/>
</dbReference>
<dbReference type="FunFam" id="1.10.60.30:FF:000002">
    <property type="entry name" value="UPF0307 protein YjgA"/>
    <property type="match status" value="1"/>
</dbReference>
<dbReference type="Gene3D" id="1.10.60.30">
    <property type="entry name" value="PSPTO4464-like domains"/>
    <property type="match status" value="2"/>
</dbReference>
<dbReference type="HAMAP" id="MF_00765">
    <property type="entry name" value="DarP"/>
    <property type="match status" value="1"/>
</dbReference>
<dbReference type="InterPro" id="IPR006839">
    <property type="entry name" value="DarP"/>
</dbReference>
<dbReference type="InterPro" id="IPR023153">
    <property type="entry name" value="DarP_sf"/>
</dbReference>
<dbReference type="NCBIfam" id="NF003593">
    <property type="entry name" value="PRK05255.1-1"/>
    <property type="match status" value="1"/>
</dbReference>
<dbReference type="PANTHER" id="PTHR38101">
    <property type="entry name" value="UPF0307 PROTEIN YJGA"/>
    <property type="match status" value="1"/>
</dbReference>
<dbReference type="PANTHER" id="PTHR38101:SF1">
    <property type="entry name" value="UPF0307 PROTEIN YJGA"/>
    <property type="match status" value="1"/>
</dbReference>
<dbReference type="Pfam" id="PF04751">
    <property type="entry name" value="DarP"/>
    <property type="match status" value="1"/>
</dbReference>
<dbReference type="PIRSF" id="PIRSF016183">
    <property type="entry name" value="UCP016183"/>
    <property type="match status" value="1"/>
</dbReference>
<dbReference type="SUPFAM" id="SSF158710">
    <property type="entry name" value="PSPTO4464-like"/>
    <property type="match status" value="1"/>
</dbReference>
<comment type="function">
    <text evidence="1">Member of a network of 50S ribosomal subunit biogenesis factors which assembles along the 30S-50S interface, preventing incorrect 23S rRNA structures from forming. Promotes peptidyl transferase center (PTC) maturation.</text>
</comment>
<comment type="subcellular location">
    <subcellularLocation>
        <location evidence="1">Cytoplasm</location>
    </subcellularLocation>
    <text evidence="1">Associates with late stage pre-50S ribosomal subunits.</text>
</comment>
<comment type="similarity">
    <text evidence="1">Belongs to the DarP family.</text>
</comment>
<gene>
    <name evidence="1" type="primary">darP</name>
    <name type="ordered locus">PLES_48521</name>
</gene>
<accession>B7V012</accession>
<name>DARP_PSEA8</name>
<keyword id="KW-0963">Cytoplasm</keyword>
<keyword id="KW-0690">Ribosome biogenesis</keyword>
<keyword id="KW-0694">RNA-binding</keyword>
<keyword id="KW-0699">rRNA-binding</keyword>